<gene>
    <name evidence="3" type="primary">tibC</name>
    <name type="ordered locus">ETEC_2140</name>
</gene>
<keyword id="KW-0002">3D-structure</keyword>
<keyword id="KW-0328">Glycosyltransferase</keyword>
<keyword id="KW-0408">Iron</keyword>
<keyword id="KW-0479">Metal-binding</keyword>
<keyword id="KW-0808">Transferase</keyword>
<accession>Q9S4K6</accession>
<accession>E3PBM2</accession>
<sequence length="406" mass="46325">MSTLKNTFFITPPDTPTQAGPENIFYDFNDGARVLLPEGKWHVRLLDADSENILFCCDVDKGWVTSSKKYFVRFRIQVFRQGEETPLLDETLKLKDRPVLISFPTGTLGDLLGWFPYAERFQSLHKCRLECTMSQDIIDLLAPQYPQIQFSTPDKPRTVAPYATYRVGLYFGGDTNNQPVDFRKVGFHRSAGYILGVDPREAPVRLDLSAPRVIQEPYVCIATQSTCQAKYWNNGTGWSEVIAHLKSLGYRVMCIDRDAHYGQGFVWNHIPWGAEDFTGKLPLQERVNLLRHASFFIGLPSGLSWLAWATRIPVVLISGFSLPNSEFYTPWRVFNSHGCYGCWDDTSLNFDHHDFLWCPRHKNTDRQFECTRLITGAQVNGVINKLHRSLTEQGVEATLKKGVSNE</sequence>
<reference key="1">
    <citation type="journal article" date="1999" name="Infect. Immun.">
        <title>Identification of a glycoprotein produced by enterotoxigenic Escherichia coli.</title>
        <authorList>
            <person name="Lindenthal C."/>
            <person name="Elsinghorst E.A."/>
        </authorList>
    </citation>
    <scope>NUCLEOTIDE SEQUENCE [GENOMIC DNA]</scope>
    <source>
        <strain>H10407 / ETEC</strain>
    </source>
</reference>
<reference key="2">
    <citation type="journal article" date="2010" name="J. Bacteriol.">
        <title>A commensal gone bad: complete genome sequence of the prototypical enterotoxigenic Escherichia coli strain H10407.</title>
        <authorList>
            <person name="Crossman L.C."/>
            <person name="Chaudhuri R.R."/>
            <person name="Beatson S.A."/>
            <person name="Wells T.J."/>
            <person name="Desvaux M."/>
            <person name="Cunningham A.F."/>
            <person name="Petty N.K."/>
            <person name="Mahon V."/>
            <person name="Brinkley C."/>
            <person name="Hobman J.L."/>
            <person name="Savarino S.J."/>
            <person name="Turner S.M."/>
            <person name="Pallen M.J."/>
            <person name="Penn C.W."/>
            <person name="Parkhill J."/>
            <person name="Turner A.K."/>
            <person name="Johnson T.J."/>
            <person name="Thomson N.R."/>
            <person name="Smith S.G."/>
            <person name="Henderson I.R."/>
        </authorList>
    </citation>
    <scope>NUCLEOTIDE SEQUENCE [LARGE SCALE GENOMIC DNA]</scope>
    <source>
        <strain>H10407 / ETEC</strain>
    </source>
</reference>
<reference key="3">
    <citation type="journal article" date="2002" name="Infect. Immun.">
        <title>Functional substitution of the TibC protein of enterotoxigenic Escherichia coli strains for the autotransporter adhesin heptosyltransferase of the AIDA system.</title>
        <authorList>
            <person name="Moormann C."/>
            <person name="Benz I."/>
            <person name="Schmidt M.A."/>
        </authorList>
    </citation>
    <scope>FUNCTION</scope>
    <scope>MUTAGENESIS OF GLU-90; LEU-348 AND CYS-358</scope>
    <source>
        <strain>469ST / ETEC</strain>
        <strain>O128:H- / 147/1 / ETEC</strain>
        <strain>O6:H- / 117/86 / ETEC</strain>
        <strain>TX-1 / ETEC</strain>
    </source>
</reference>
<reference evidence="6 7" key="4">
    <citation type="journal article" date="2014" name="Elife">
        <title>A structural mechanism for bacterial autotransporter glycosylation by a dodecameric heptosyltransferase family.</title>
        <authorList>
            <person name="Yao Q."/>
            <person name="Lu Q."/>
            <person name="Wan X."/>
            <person name="Song F."/>
            <person name="Xu Y."/>
            <person name="Hu M."/>
            <person name="Zamyatina A."/>
            <person name="Liu X."/>
            <person name="Huang N."/>
            <person name="Zhu P."/>
            <person name="Shao F."/>
        </authorList>
    </citation>
    <scope>X-RAY CRYSTALLOGRAPHY (2.88 ANGSTROMS) OF WILD TYPE AND MUTANT ALA-110 IN COMPLEX WITH IRON AND ADP-D-GLYCERO-BETA-D-MANNO-HEPTOSE</scope>
    <scope>FUNCTION</scope>
    <scope>CATALYTIC ACTIVITY</scope>
    <scope>COFACTOR</scope>
    <scope>SUBUNIT</scope>
    <scope>ACTIVE SITE</scope>
    <scope>MUTAGENESIS OF 2-SER--LYS-95; ASP-110; LYS-230; PHE-265; VAL-266; ARG-286; PRO-300; TRP-305; CYS-339; CYS-342; CYS-358 AND CYS-370</scope>
</reference>
<name>TIBC_ECOH1</name>
<feature type="chain" id="PRO_0000076354" description="Autotransporter heptosyltransferase TibC">
    <location>
        <begin position="1"/>
        <end position="406"/>
    </location>
</feature>
<feature type="active site" description="Proton acceptor" evidence="2">
    <location>
        <position position="110"/>
    </location>
</feature>
<feature type="binding site" evidence="2 7">
    <location>
        <position position="107"/>
    </location>
    <ligand>
        <name>ADP-D-glycero-beta-D-manno-heptose</name>
        <dbReference type="ChEBI" id="CHEBI:59967"/>
    </ligand>
</feature>
<feature type="binding site" evidence="2 7">
    <location>
        <position position="108"/>
    </location>
    <ligand>
        <name>ADP-D-glycero-beta-D-manno-heptose</name>
        <dbReference type="ChEBI" id="CHEBI:59967"/>
    </ligand>
</feature>
<feature type="binding site" evidence="2 7">
    <location>
        <position position="109"/>
    </location>
    <ligand>
        <name>ADP-D-glycero-beta-D-manno-heptose</name>
        <dbReference type="ChEBI" id="CHEBI:59967"/>
    </ligand>
</feature>
<feature type="binding site" evidence="2 7">
    <location>
        <position position="224"/>
    </location>
    <ligand>
        <name>ADP-D-glycero-beta-D-manno-heptose</name>
        <dbReference type="ChEBI" id="CHEBI:59967"/>
    </ligand>
</feature>
<feature type="binding site" evidence="2 7">
    <location>
        <position position="226"/>
    </location>
    <ligand>
        <name>ADP-D-glycero-beta-D-manno-heptose</name>
        <dbReference type="ChEBI" id="CHEBI:59967"/>
    </ligand>
</feature>
<feature type="binding site" evidence="2 7">
    <location>
        <position position="230"/>
    </location>
    <ligand>
        <name>ADP-D-glycero-beta-D-manno-heptose</name>
        <dbReference type="ChEBI" id="CHEBI:59967"/>
    </ligand>
</feature>
<feature type="binding site" evidence="2 7">
    <location>
        <position position="257"/>
    </location>
    <ligand>
        <name>ADP-D-glycero-beta-D-manno-heptose</name>
        <dbReference type="ChEBI" id="CHEBI:59967"/>
    </ligand>
</feature>
<feature type="binding site" evidence="2 7">
    <location>
        <position position="281"/>
    </location>
    <ligand>
        <name>ADP-D-glycero-beta-D-manno-heptose</name>
        <dbReference type="ChEBI" id="CHEBI:59967"/>
    </ligand>
</feature>
<feature type="binding site" evidence="2 7">
    <location>
        <position position="302"/>
    </location>
    <ligand>
        <name>ADP-D-glycero-beta-D-manno-heptose</name>
        <dbReference type="ChEBI" id="CHEBI:59967"/>
    </ligand>
</feature>
<feature type="binding site" evidence="2 7">
    <location>
        <position position="326"/>
    </location>
    <ligand>
        <name>ADP-D-glycero-beta-D-manno-heptose</name>
        <dbReference type="ChEBI" id="CHEBI:59967"/>
    </ligand>
</feature>
<feature type="binding site" evidence="2 6 7">
    <location>
        <position position="339"/>
    </location>
    <ligand>
        <name>Fe(3+)</name>
        <dbReference type="ChEBI" id="CHEBI:29034"/>
        <note>structural</note>
    </ligand>
</feature>
<feature type="binding site" evidence="2 6 7">
    <location>
        <position position="342"/>
    </location>
    <ligand>
        <name>Fe(3+)</name>
        <dbReference type="ChEBI" id="CHEBI:29034"/>
        <note>structural</note>
    </ligand>
</feature>
<feature type="binding site" evidence="2 6 7">
    <location>
        <position position="358"/>
    </location>
    <ligand>
        <name>Fe(3+)</name>
        <dbReference type="ChEBI" id="CHEBI:29034"/>
        <note>structural</note>
    </ligand>
</feature>
<feature type="binding site" evidence="2 6">
    <location>
        <position position="370"/>
    </location>
    <ligand>
        <name>Fe(3+)</name>
        <dbReference type="ChEBI" id="CHEBI:29034"/>
        <note>structural</note>
    </ligand>
</feature>
<feature type="mutagenesis site" description="Loss of catalytic activity." evidence="2">
    <location>
        <begin position="2"/>
        <end position="95"/>
    </location>
</feature>
<feature type="mutagenesis site" description="No effect." evidence="1">
    <original>E</original>
    <variation>K</variation>
    <location>
        <position position="90"/>
    </location>
</feature>
<feature type="mutagenesis site" description="Loss of catalytic activity." evidence="2">
    <original>D</original>
    <variation>A</variation>
    <location>
        <position position="110"/>
    </location>
</feature>
<feature type="mutagenesis site" description="Loss of catalytic activity." evidence="2">
    <original>K</original>
    <variation>A</variation>
    <location>
        <position position="230"/>
    </location>
</feature>
<feature type="mutagenesis site" description="Loss of catalytic activity. Does not form homododecamer but forms homodimer." evidence="2">
    <original>F</original>
    <variation>D</variation>
    <location>
        <position position="265"/>
    </location>
</feature>
<feature type="mutagenesis site" description="Loss of catalytic activity. Does not form homododecamer but forms homodimer." evidence="2">
    <original>V</original>
    <variation>D</variation>
    <location>
        <position position="266"/>
    </location>
</feature>
<feature type="mutagenesis site" description="Severe loss of catalytic activity." evidence="2">
    <original>R</original>
    <variation>A</variation>
    <location>
        <position position="286"/>
    </location>
</feature>
<feature type="mutagenesis site" description="Loss of ligand stereospecificity. Can use both ADP-D,D-heptose and ADP-L,D-heptose as sugar donor." evidence="2">
    <original>P</original>
    <variation>S</variation>
    <location>
        <position position="300"/>
    </location>
</feature>
<feature type="mutagenesis site" description="Severe loss of catalytic activity." evidence="2">
    <original>W</original>
    <variation>A</variation>
    <location>
        <position position="305"/>
    </location>
</feature>
<feature type="mutagenesis site" description="Loss of catalytic activity. Loss of iron binding. Does not form homododecamer." evidence="2">
    <original>C</original>
    <variation>S</variation>
    <location>
        <position position="339"/>
    </location>
</feature>
<feature type="mutagenesis site" description="Loss of catalytic activity. Loss of iron binding. Does not form homododecamer." evidence="2">
    <original>C</original>
    <variation>S</variation>
    <location>
        <position position="342"/>
    </location>
</feature>
<feature type="mutagenesis site" description="No effect." evidence="1">
    <original>L</original>
    <variation>P</variation>
    <location>
        <position position="348"/>
    </location>
</feature>
<feature type="mutagenesis site" description="Loss of glycosyltransferase activity." evidence="1">
    <original>C</original>
    <variation>R</variation>
    <location>
        <position position="358"/>
    </location>
</feature>
<feature type="mutagenesis site" description="Loss of catalytic activity. Loss of iron binding. Does not form homododecamer." evidence="2">
    <original>C</original>
    <variation>S</variation>
    <location>
        <position position="358"/>
    </location>
</feature>
<feature type="mutagenesis site" description="Loss of catalytic activity. Loss of iron binding. Does not form homododecamer." evidence="2">
    <original>C</original>
    <variation>S</variation>
    <location>
        <position position="370"/>
    </location>
</feature>
<feature type="strand" evidence="8">
    <location>
        <begin position="17"/>
        <end position="19"/>
    </location>
</feature>
<feature type="helix" evidence="8">
    <location>
        <begin position="21"/>
        <end position="23"/>
    </location>
</feature>
<feature type="strand" evidence="8">
    <location>
        <begin position="25"/>
        <end position="28"/>
    </location>
</feature>
<feature type="strand" evidence="8">
    <location>
        <begin position="31"/>
        <end position="36"/>
    </location>
</feature>
<feature type="strand" evidence="8">
    <location>
        <begin position="41"/>
        <end position="47"/>
    </location>
</feature>
<feature type="turn" evidence="8">
    <location>
        <begin position="48"/>
        <end position="50"/>
    </location>
</feature>
<feature type="strand" evidence="8">
    <location>
        <begin position="53"/>
        <end position="65"/>
    </location>
</feature>
<feature type="strand" evidence="8">
    <location>
        <begin position="74"/>
        <end position="79"/>
    </location>
</feature>
<feature type="strand" evidence="8">
    <location>
        <begin position="81"/>
        <end position="85"/>
    </location>
</feature>
<feature type="strand" evidence="8">
    <location>
        <begin position="87"/>
        <end position="91"/>
    </location>
</feature>
<feature type="strand" evidence="8">
    <location>
        <begin position="98"/>
        <end position="102"/>
    </location>
</feature>
<feature type="helix" evidence="8">
    <location>
        <begin position="108"/>
        <end position="125"/>
    </location>
</feature>
<feature type="strand" evidence="8">
    <location>
        <begin position="128"/>
        <end position="132"/>
    </location>
</feature>
<feature type="helix" evidence="8">
    <location>
        <begin position="135"/>
        <end position="141"/>
    </location>
</feature>
<feature type="helix" evidence="8">
    <location>
        <begin position="142"/>
        <end position="144"/>
    </location>
</feature>
<feature type="strand" evidence="8">
    <location>
        <begin position="148"/>
        <end position="151"/>
    </location>
</feature>
<feature type="strand" evidence="8">
    <location>
        <begin position="162"/>
        <end position="166"/>
    </location>
</feature>
<feature type="strand" evidence="8">
    <location>
        <begin position="176"/>
        <end position="180"/>
    </location>
</feature>
<feature type="helix" evidence="8">
    <location>
        <begin position="182"/>
        <end position="185"/>
    </location>
</feature>
<feature type="turn" evidence="8">
    <location>
        <begin position="187"/>
        <end position="189"/>
    </location>
</feature>
<feature type="helix" evidence="8">
    <location>
        <begin position="190"/>
        <end position="195"/>
    </location>
</feature>
<feature type="strand" evidence="8">
    <location>
        <begin position="218"/>
        <end position="221"/>
    </location>
</feature>
<feature type="helix" evidence="8">
    <location>
        <begin position="228"/>
        <end position="230"/>
    </location>
</feature>
<feature type="helix" evidence="8">
    <location>
        <begin position="237"/>
        <end position="247"/>
    </location>
</feature>
<feature type="strand" evidence="8">
    <location>
        <begin position="251"/>
        <end position="254"/>
    </location>
</feature>
<feature type="strand" evidence="8">
    <location>
        <begin position="259"/>
        <end position="263"/>
    </location>
</feature>
<feature type="strand" evidence="8">
    <location>
        <begin position="266"/>
        <end position="269"/>
    </location>
</feature>
<feature type="helix" evidence="8">
    <location>
        <begin position="283"/>
        <end position="291"/>
    </location>
</feature>
<feature type="strand" evidence="8">
    <location>
        <begin position="294"/>
        <end position="298"/>
    </location>
</feature>
<feature type="helix" evidence="8">
    <location>
        <begin position="303"/>
        <end position="309"/>
    </location>
</feature>
<feature type="strand" evidence="8">
    <location>
        <begin position="314"/>
        <end position="317"/>
    </location>
</feature>
<feature type="strand" evidence="8">
    <location>
        <begin position="319"/>
        <end position="321"/>
    </location>
</feature>
<feature type="helix" evidence="8">
    <location>
        <begin position="323"/>
        <end position="325"/>
    </location>
</feature>
<feature type="helix" evidence="8">
    <location>
        <begin position="342"/>
        <end position="344"/>
    </location>
</feature>
<feature type="turn" evidence="8">
    <location>
        <begin position="359"/>
        <end position="363"/>
    </location>
</feature>
<feature type="turn" evidence="8">
    <location>
        <begin position="365"/>
        <end position="368"/>
    </location>
</feature>
<feature type="helix" evidence="8">
    <location>
        <begin position="369"/>
        <end position="372"/>
    </location>
</feature>
<feature type="helix" evidence="8">
    <location>
        <begin position="376"/>
        <end position="390"/>
    </location>
</feature>
<feature type="turn" evidence="8">
    <location>
        <begin position="395"/>
        <end position="397"/>
    </location>
</feature>
<protein>
    <recommendedName>
        <fullName evidence="4">Autotransporter heptosyltransferase TibC</fullName>
        <ecNumber evidence="2">2.4.99.-</ecNumber>
    </recommendedName>
</protein>
<proteinExistence type="evidence at protein level"/>
<comment type="function">
    <text evidence="1 2">Glycosylates adhesin TibA (PubMed:11953358, PubMed:25310236). Specifically adds anomer D-glycero-beta-D-manno-heptose (PubMed:25310236). Cannot use ADP-L-glycero-beta-D-manno-heptose as a sugar donor (PubMed:25310236).</text>
</comment>
<comment type="catalytic activity">
    <reaction evidence="2">
        <text>ADP-D-glycero-beta-D-manno-heptose + L-seryl-[protein] = O-(D-glycero-alpha-D-manno-heptosyl)-L-seryl-[protein] + ADP + H(+)</text>
        <dbReference type="Rhea" id="RHEA:75903"/>
        <dbReference type="Rhea" id="RHEA-COMP:9863"/>
        <dbReference type="Rhea" id="RHEA-COMP:18605"/>
        <dbReference type="ChEBI" id="CHEBI:15378"/>
        <dbReference type="ChEBI" id="CHEBI:29999"/>
        <dbReference type="ChEBI" id="CHEBI:59967"/>
        <dbReference type="ChEBI" id="CHEBI:194481"/>
        <dbReference type="ChEBI" id="CHEBI:456216"/>
    </reaction>
</comment>
<comment type="cofactor">
    <cofactor evidence="2">
        <name>Fe(3+)</name>
        <dbReference type="ChEBI" id="CHEBI:29034"/>
    </cofactor>
    <text evidence="2">Binds 1 Fe(3+) cation per subunit.</text>
</comment>
<comment type="subunit">
    <text evidence="2">Homododecamer composed of 6 homodimers forming a ring.</text>
</comment>
<comment type="miscellaneous">
    <text evidence="1 2">Able to functionally replace the autotransporter adhesin heptosyltransferase (AAH) of the AIDA system in fully restoring activity to the AIDA-I adhesin depending on the modification of AIDA-I with heptose residues.</text>
</comment>
<comment type="similarity">
    <text evidence="5">Belongs to the glycosyltransferase 9 family.</text>
</comment>
<organism>
    <name type="scientific">Escherichia coli O78:H11 (strain H10407 / ETEC)</name>
    <dbReference type="NCBI Taxonomy" id="316401"/>
    <lineage>
        <taxon>Bacteria</taxon>
        <taxon>Pseudomonadati</taxon>
        <taxon>Pseudomonadota</taxon>
        <taxon>Gammaproteobacteria</taxon>
        <taxon>Enterobacterales</taxon>
        <taxon>Enterobacteriaceae</taxon>
        <taxon>Escherichia</taxon>
    </lineage>
</organism>
<dbReference type="EC" id="2.4.99.-" evidence="2"/>
<dbReference type="EMBL" id="AF131891">
    <property type="protein sequence ID" value="AAD46996.1"/>
    <property type="molecule type" value="Genomic_DNA"/>
</dbReference>
<dbReference type="EMBL" id="FN649414">
    <property type="protein sequence ID" value="CBJ01642.1"/>
    <property type="molecule type" value="Genomic_DNA"/>
</dbReference>
<dbReference type="RefSeq" id="WP_000105682.1">
    <property type="nucleotide sequence ID" value="NC_017633.1"/>
</dbReference>
<dbReference type="PDB" id="4RAP">
    <property type="method" value="X-ray"/>
    <property type="resolution" value="2.88 A"/>
    <property type="chains" value="A/B/C/D/E/F/G/H/I/J/K/L=1-406"/>
</dbReference>
<dbReference type="PDB" id="4RB4">
    <property type="method" value="X-ray"/>
    <property type="resolution" value="3.88 A"/>
    <property type="chains" value="A/B/C/D/E/F/G/H/I/J/K/L=1-406"/>
</dbReference>
<dbReference type="PDBsum" id="4RAP"/>
<dbReference type="PDBsum" id="4RB4"/>
<dbReference type="SMR" id="Q9S4K6"/>
<dbReference type="KEGG" id="elh:ETEC_2140"/>
<dbReference type="HOGENOM" id="CLU_044689_0_0_6"/>
<dbReference type="EvolutionaryTrace" id="Q9S4K6"/>
<dbReference type="GO" id="GO:0016757">
    <property type="term" value="F:glycosyltransferase activity"/>
    <property type="evidence" value="ECO:0000314"/>
    <property type="project" value="CACAO"/>
</dbReference>
<dbReference type="GO" id="GO:0046872">
    <property type="term" value="F:metal ion binding"/>
    <property type="evidence" value="ECO:0007669"/>
    <property type="project" value="UniProtKB-KW"/>
</dbReference>
<dbReference type="CDD" id="cd03789">
    <property type="entry name" value="GT9_LPS_heptosyltransferase"/>
    <property type="match status" value="1"/>
</dbReference>
<dbReference type="FunFam" id="3.40.50.2000:FF:000414">
    <property type="entry name" value="Autotransporter strand-loop-strand O-heptosyltransferase"/>
    <property type="match status" value="1"/>
</dbReference>
<dbReference type="Gene3D" id="3.40.50.2000">
    <property type="entry name" value="Glycogen Phosphorylase B"/>
    <property type="match status" value="1"/>
</dbReference>
<dbReference type="InterPro" id="IPR030929">
    <property type="entry name" value="Aah/TibC-like"/>
</dbReference>
<dbReference type="InterPro" id="IPR002201">
    <property type="entry name" value="Glyco_trans_9"/>
</dbReference>
<dbReference type="InterPro" id="IPR049327">
    <property type="entry name" value="TibC/BAHTCr-like_N"/>
</dbReference>
<dbReference type="NCBIfam" id="TIGR04414">
    <property type="entry name" value="hepto_Aah_TibC"/>
    <property type="match status" value="1"/>
</dbReference>
<dbReference type="Pfam" id="PF01075">
    <property type="entry name" value="Glyco_transf_9"/>
    <property type="match status" value="1"/>
</dbReference>
<dbReference type="Pfam" id="PF21129">
    <property type="entry name" value="TibC_1st"/>
    <property type="match status" value="1"/>
</dbReference>
<dbReference type="SUPFAM" id="SSF53756">
    <property type="entry name" value="UDP-Glycosyltransferase/glycogen phosphorylase"/>
    <property type="match status" value="1"/>
</dbReference>
<evidence type="ECO:0000269" key="1">
    <source>
    </source>
</evidence>
<evidence type="ECO:0000269" key="2">
    <source>
    </source>
</evidence>
<evidence type="ECO:0000303" key="3">
    <source>
    </source>
</evidence>
<evidence type="ECO:0000303" key="4">
    <source>
    </source>
</evidence>
<evidence type="ECO:0000305" key="5"/>
<evidence type="ECO:0007744" key="6">
    <source>
        <dbReference type="PDB" id="4RAP"/>
    </source>
</evidence>
<evidence type="ECO:0007744" key="7">
    <source>
        <dbReference type="PDB" id="4RB4"/>
    </source>
</evidence>
<evidence type="ECO:0007829" key="8">
    <source>
        <dbReference type="PDB" id="4RAP"/>
    </source>
</evidence>